<name>ILVD_JANMA</name>
<dbReference type="EC" id="4.2.1.9" evidence="1"/>
<dbReference type="EMBL" id="CP000269">
    <property type="protein sequence ID" value="ABR88352.1"/>
    <property type="molecule type" value="Genomic_DNA"/>
</dbReference>
<dbReference type="RefSeq" id="WP_012078516.1">
    <property type="nucleotide sequence ID" value="NC_009659.1"/>
</dbReference>
<dbReference type="SMR" id="A6SVP5"/>
<dbReference type="STRING" id="375286.mma_0652"/>
<dbReference type="KEGG" id="mms:mma_0652"/>
<dbReference type="eggNOG" id="COG0129">
    <property type="taxonomic scope" value="Bacteria"/>
</dbReference>
<dbReference type="HOGENOM" id="CLU_014271_4_2_4"/>
<dbReference type="OrthoDB" id="9807077at2"/>
<dbReference type="UniPathway" id="UPA00047">
    <property type="reaction ID" value="UER00057"/>
</dbReference>
<dbReference type="UniPathway" id="UPA00049">
    <property type="reaction ID" value="UER00061"/>
</dbReference>
<dbReference type="Proteomes" id="UP000006388">
    <property type="component" value="Chromosome"/>
</dbReference>
<dbReference type="GO" id="GO:0051537">
    <property type="term" value="F:2 iron, 2 sulfur cluster binding"/>
    <property type="evidence" value="ECO:0007669"/>
    <property type="project" value="UniProtKB-UniRule"/>
</dbReference>
<dbReference type="GO" id="GO:0004160">
    <property type="term" value="F:dihydroxy-acid dehydratase activity"/>
    <property type="evidence" value="ECO:0007669"/>
    <property type="project" value="UniProtKB-UniRule"/>
</dbReference>
<dbReference type="GO" id="GO:0000287">
    <property type="term" value="F:magnesium ion binding"/>
    <property type="evidence" value="ECO:0007669"/>
    <property type="project" value="UniProtKB-UniRule"/>
</dbReference>
<dbReference type="GO" id="GO:0009097">
    <property type="term" value="P:isoleucine biosynthetic process"/>
    <property type="evidence" value="ECO:0007669"/>
    <property type="project" value="UniProtKB-UniRule"/>
</dbReference>
<dbReference type="GO" id="GO:0009099">
    <property type="term" value="P:L-valine biosynthetic process"/>
    <property type="evidence" value="ECO:0007669"/>
    <property type="project" value="UniProtKB-UniRule"/>
</dbReference>
<dbReference type="FunFam" id="3.50.30.80:FF:000001">
    <property type="entry name" value="Dihydroxy-acid dehydratase"/>
    <property type="match status" value="1"/>
</dbReference>
<dbReference type="Gene3D" id="3.50.30.80">
    <property type="entry name" value="IlvD/EDD C-terminal domain-like"/>
    <property type="match status" value="1"/>
</dbReference>
<dbReference type="HAMAP" id="MF_00012">
    <property type="entry name" value="IlvD"/>
    <property type="match status" value="1"/>
</dbReference>
<dbReference type="InterPro" id="IPR050165">
    <property type="entry name" value="DHAD_IlvD/Edd"/>
</dbReference>
<dbReference type="InterPro" id="IPR042096">
    <property type="entry name" value="Dihydro-acid_dehy_C"/>
</dbReference>
<dbReference type="InterPro" id="IPR004404">
    <property type="entry name" value="DihydroxyA_deHydtase"/>
</dbReference>
<dbReference type="InterPro" id="IPR020558">
    <property type="entry name" value="DiOHA_6PGluconate_deHydtase_CS"/>
</dbReference>
<dbReference type="InterPro" id="IPR056740">
    <property type="entry name" value="ILV_EDD_C"/>
</dbReference>
<dbReference type="InterPro" id="IPR000581">
    <property type="entry name" value="ILV_EDD_N"/>
</dbReference>
<dbReference type="InterPro" id="IPR037237">
    <property type="entry name" value="IlvD/EDD_N"/>
</dbReference>
<dbReference type="NCBIfam" id="TIGR00110">
    <property type="entry name" value="ilvD"/>
    <property type="match status" value="1"/>
</dbReference>
<dbReference type="NCBIfam" id="NF002068">
    <property type="entry name" value="PRK00911.1"/>
    <property type="match status" value="1"/>
</dbReference>
<dbReference type="PANTHER" id="PTHR21000">
    <property type="entry name" value="DIHYDROXY-ACID DEHYDRATASE DAD"/>
    <property type="match status" value="1"/>
</dbReference>
<dbReference type="PANTHER" id="PTHR21000:SF5">
    <property type="entry name" value="DIHYDROXY-ACID DEHYDRATASE, MITOCHONDRIAL"/>
    <property type="match status" value="1"/>
</dbReference>
<dbReference type="Pfam" id="PF24877">
    <property type="entry name" value="ILV_EDD_C"/>
    <property type="match status" value="1"/>
</dbReference>
<dbReference type="Pfam" id="PF00920">
    <property type="entry name" value="ILVD_EDD_N"/>
    <property type="match status" value="1"/>
</dbReference>
<dbReference type="SUPFAM" id="SSF143975">
    <property type="entry name" value="IlvD/EDD N-terminal domain-like"/>
    <property type="match status" value="1"/>
</dbReference>
<dbReference type="SUPFAM" id="SSF52016">
    <property type="entry name" value="LeuD/IlvD-like"/>
    <property type="match status" value="1"/>
</dbReference>
<dbReference type="PROSITE" id="PS00886">
    <property type="entry name" value="ILVD_EDD_1"/>
    <property type="match status" value="1"/>
</dbReference>
<dbReference type="PROSITE" id="PS00887">
    <property type="entry name" value="ILVD_EDD_2"/>
    <property type="match status" value="1"/>
</dbReference>
<sequence length="557" mass="58932">MAFNRRSKNITQGISRSPNRSMYYAMGYEKEDFDKPMVGVANGHSTITPCNSGLQKLADIAIKTIKDSGGNPQVFGTPTISDGMSMGTEGMKYSLISREVIADCIETAVNGQWMDGVLVIGGCDKNMPGGMIAMLRTNVPSIYVYGGTIKPGNWKGKDLTIVSAFEAVGEFTAGRMSQEDFDGIERNACPSAGSCGGMYTANTMSSSFEALGLALPYSSTMANPDDEKVGSAAESARVLIEAIKNDLKPRDIVTRKAIENAVAVIMATGGSTNAVLHFLAIAHAAEVEWTIDDFERMRKKVPVICDLKPSGKYVATDLHKAGGIPQVMKVLLDAGLLHGDCMTITGQTVAEALAHIPSVPRADQHVIHPIKDALYEQGHLAILKGNLSPEGCVAKITGLKNPVITGPARVFDDEYSAMDAIMANKIVAGDVLVMRYLGPKGGPGMPEMLAPTSALVGQGLGESVGLITDGRFSGGTWGMVVGHVSPEAFVGGLIGLVEEGDSVTIDAHKLLIQLNVPEEEIARRRANWKQPAPRYTRGVLSKFAALASSASKGAVTG</sequence>
<organism>
    <name type="scientific">Janthinobacterium sp. (strain Marseille)</name>
    <name type="common">Minibacterium massiliensis</name>
    <dbReference type="NCBI Taxonomy" id="375286"/>
    <lineage>
        <taxon>Bacteria</taxon>
        <taxon>Pseudomonadati</taxon>
        <taxon>Pseudomonadota</taxon>
        <taxon>Betaproteobacteria</taxon>
        <taxon>Burkholderiales</taxon>
        <taxon>Oxalobacteraceae</taxon>
        <taxon>Janthinobacterium</taxon>
    </lineage>
</organism>
<comment type="function">
    <text evidence="1">Functions in the biosynthesis of branched-chain amino acids. Catalyzes the dehydration of (2R,3R)-2,3-dihydroxy-3-methylpentanoate (2,3-dihydroxy-3-methylvalerate) into 2-oxo-3-methylpentanoate (2-oxo-3-methylvalerate) and of (2R)-2,3-dihydroxy-3-methylbutanoate (2,3-dihydroxyisovalerate) into 2-oxo-3-methylbutanoate (2-oxoisovalerate), the penultimate precursor to L-isoleucine and L-valine, respectively.</text>
</comment>
<comment type="catalytic activity">
    <reaction evidence="1">
        <text>(2R)-2,3-dihydroxy-3-methylbutanoate = 3-methyl-2-oxobutanoate + H2O</text>
        <dbReference type="Rhea" id="RHEA:24809"/>
        <dbReference type="ChEBI" id="CHEBI:11851"/>
        <dbReference type="ChEBI" id="CHEBI:15377"/>
        <dbReference type="ChEBI" id="CHEBI:49072"/>
        <dbReference type="EC" id="4.2.1.9"/>
    </reaction>
    <physiologicalReaction direction="left-to-right" evidence="1">
        <dbReference type="Rhea" id="RHEA:24810"/>
    </physiologicalReaction>
</comment>
<comment type="catalytic activity">
    <reaction evidence="1">
        <text>(2R,3R)-2,3-dihydroxy-3-methylpentanoate = (S)-3-methyl-2-oxopentanoate + H2O</text>
        <dbReference type="Rhea" id="RHEA:27694"/>
        <dbReference type="ChEBI" id="CHEBI:15377"/>
        <dbReference type="ChEBI" id="CHEBI:35146"/>
        <dbReference type="ChEBI" id="CHEBI:49258"/>
        <dbReference type="EC" id="4.2.1.9"/>
    </reaction>
    <physiologicalReaction direction="left-to-right" evidence="1">
        <dbReference type="Rhea" id="RHEA:27695"/>
    </physiologicalReaction>
</comment>
<comment type="cofactor">
    <cofactor evidence="1">
        <name>[2Fe-2S] cluster</name>
        <dbReference type="ChEBI" id="CHEBI:190135"/>
    </cofactor>
    <text evidence="1">Binds 1 [2Fe-2S] cluster per subunit. This cluster acts as a Lewis acid cofactor.</text>
</comment>
<comment type="cofactor">
    <cofactor evidence="1">
        <name>Mg(2+)</name>
        <dbReference type="ChEBI" id="CHEBI:18420"/>
    </cofactor>
</comment>
<comment type="pathway">
    <text evidence="1">Amino-acid biosynthesis; L-isoleucine biosynthesis; L-isoleucine from 2-oxobutanoate: step 3/4.</text>
</comment>
<comment type="pathway">
    <text evidence="1">Amino-acid biosynthesis; L-valine biosynthesis; L-valine from pyruvate: step 3/4.</text>
</comment>
<comment type="subunit">
    <text evidence="1">Homodimer.</text>
</comment>
<comment type="similarity">
    <text evidence="1">Belongs to the IlvD/Edd family.</text>
</comment>
<proteinExistence type="inferred from homology"/>
<protein>
    <recommendedName>
        <fullName evidence="1">Dihydroxy-acid dehydratase</fullName>
        <shortName evidence="1">DAD</shortName>
        <ecNumber evidence="1">4.2.1.9</ecNumber>
    </recommendedName>
</protein>
<feature type="chain" id="PRO_1000000995" description="Dihydroxy-acid dehydratase">
    <location>
        <begin position="1"/>
        <end position="557"/>
    </location>
</feature>
<feature type="active site" description="Proton acceptor" evidence="1">
    <location>
        <position position="473"/>
    </location>
</feature>
<feature type="binding site" evidence="1">
    <location>
        <position position="50"/>
    </location>
    <ligand>
        <name>[2Fe-2S] cluster</name>
        <dbReference type="ChEBI" id="CHEBI:190135"/>
    </ligand>
</feature>
<feature type="binding site" evidence="1">
    <location>
        <position position="82"/>
    </location>
    <ligand>
        <name>Mg(2+)</name>
        <dbReference type="ChEBI" id="CHEBI:18420"/>
    </ligand>
</feature>
<feature type="binding site" evidence="1">
    <location>
        <position position="123"/>
    </location>
    <ligand>
        <name>[2Fe-2S] cluster</name>
        <dbReference type="ChEBI" id="CHEBI:190135"/>
    </ligand>
</feature>
<feature type="binding site" evidence="1">
    <location>
        <position position="124"/>
    </location>
    <ligand>
        <name>Mg(2+)</name>
        <dbReference type="ChEBI" id="CHEBI:18420"/>
    </ligand>
</feature>
<feature type="binding site" description="via carbamate group" evidence="1">
    <location>
        <position position="125"/>
    </location>
    <ligand>
        <name>Mg(2+)</name>
        <dbReference type="ChEBI" id="CHEBI:18420"/>
    </ligand>
</feature>
<feature type="binding site" evidence="1">
    <location>
        <position position="195"/>
    </location>
    <ligand>
        <name>[2Fe-2S] cluster</name>
        <dbReference type="ChEBI" id="CHEBI:190135"/>
    </ligand>
</feature>
<feature type="binding site" evidence="1">
    <location>
        <position position="447"/>
    </location>
    <ligand>
        <name>Mg(2+)</name>
        <dbReference type="ChEBI" id="CHEBI:18420"/>
    </ligand>
</feature>
<feature type="modified residue" description="N6-carboxylysine" evidence="1">
    <location>
        <position position="125"/>
    </location>
</feature>
<accession>A6SVP5</accession>
<keyword id="KW-0001">2Fe-2S</keyword>
<keyword id="KW-0028">Amino-acid biosynthesis</keyword>
<keyword id="KW-0100">Branched-chain amino acid biosynthesis</keyword>
<keyword id="KW-0408">Iron</keyword>
<keyword id="KW-0411">Iron-sulfur</keyword>
<keyword id="KW-0456">Lyase</keyword>
<keyword id="KW-0460">Magnesium</keyword>
<keyword id="KW-0479">Metal-binding</keyword>
<gene>
    <name evidence="1" type="primary">ilvD</name>
    <name type="ordered locus">mma_0652</name>
</gene>
<reference key="1">
    <citation type="journal article" date="2007" name="PLoS Genet.">
        <title>Genome analysis of Minibacterium massiliensis highlights the convergent evolution of water-living bacteria.</title>
        <authorList>
            <person name="Audic S."/>
            <person name="Robert C."/>
            <person name="Campagna B."/>
            <person name="Parinello H."/>
            <person name="Claverie J.-M."/>
            <person name="Raoult D."/>
            <person name="Drancourt M."/>
        </authorList>
    </citation>
    <scope>NUCLEOTIDE SEQUENCE [LARGE SCALE GENOMIC DNA]</scope>
    <source>
        <strain>Marseille</strain>
    </source>
</reference>
<evidence type="ECO:0000255" key="1">
    <source>
        <dbReference type="HAMAP-Rule" id="MF_00012"/>
    </source>
</evidence>